<keyword id="KW-0067">ATP-binding</keyword>
<keyword id="KW-0131">Cell cycle</keyword>
<keyword id="KW-0132">Cell division</keyword>
<keyword id="KW-0133">Cell shape</keyword>
<keyword id="KW-0961">Cell wall biogenesis/degradation</keyword>
<keyword id="KW-0963">Cytoplasm</keyword>
<keyword id="KW-0436">Ligase</keyword>
<keyword id="KW-0547">Nucleotide-binding</keyword>
<keyword id="KW-0573">Peptidoglycan synthesis</keyword>
<gene>
    <name evidence="1" type="primary">murC</name>
    <name type="ordered locus">Rsph17025_0694</name>
</gene>
<organism>
    <name type="scientific">Cereibacter sphaeroides (strain ATCC 17025 / ATH 2.4.3)</name>
    <name type="common">Rhodobacter sphaeroides</name>
    <dbReference type="NCBI Taxonomy" id="349102"/>
    <lineage>
        <taxon>Bacteria</taxon>
        <taxon>Pseudomonadati</taxon>
        <taxon>Pseudomonadota</taxon>
        <taxon>Alphaproteobacteria</taxon>
        <taxon>Rhodobacterales</taxon>
        <taxon>Paracoccaceae</taxon>
        <taxon>Cereibacter</taxon>
    </lineage>
</organism>
<reference key="1">
    <citation type="submission" date="2007-04" db="EMBL/GenBank/DDBJ databases">
        <title>Complete sequence of chromosome of Rhodobacter sphaeroides ATCC 17025.</title>
        <authorList>
            <consortium name="US DOE Joint Genome Institute"/>
            <person name="Copeland A."/>
            <person name="Lucas S."/>
            <person name="Lapidus A."/>
            <person name="Barry K."/>
            <person name="Detter J.C."/>
            <person name="Glavina del Rio T."/>
            <person name="Hammon N."/>
            <person name="Israni S."/>
            <person name="Dalin E."/>
            <person name="Tice H."/>
            <person name="Pitluck S."/>
            <person name="Chertkov O."/>
            <person name="Brettin T."/>
            <person name="Bruce D."/>
            <person name="Han C."/>
            <person name="Schmutz J."/>
            <person name="Larimer F."/>
            <person name="Land M."/>
            <person name="Hauser L."/>
            <person name="Kyrpides N."/>
            <person name="Kim E."/>
            <person name="Richardson P."/>
            <person name="Mackenzie C."/>
            <person name="Choudhary M."/>
            <person name="Donohue T.J."/>
            <person name="Kaplan S."/>
        </authorList>
    </citation>
    <scope>NUCLEOTIDE SEQUENCE [LARGE SCALE GENOMIC DNA]</scope>
    <source>
        <strain>ATCC 17025 / ATH 2.4.3</strain>
    </source>
</reference>
<feature type="chain" id="PRO_1000004395" description="UDP-N-acetylmuramate--L-alanine ligase">
    <location>
        <begin position="1"/>
        <end position="470"/>
    </location>
</feature>
<feature type="binding site" evidence="1">
    <location>
        <begin position="118"/>
        <end position="124"/>
    </location>
    <ligand>
        <name>ATP</name>
        <dbReference type="ChEBI" id="CHEBI:30616"/>
    </ligand>
</feature>
<sequence length="470" mass="50292">MNAATKLPGELGPIHFVGIGGIGMSGIAEVLMTLGYRVQGSDAKASKITDRLVSLGATFFEGQRAQNLGDAGVVVISSAIKKGNPELEEARRRGLPVVRRAEMLAELMRLRSNIAIAGTHGKTTTTTMVATLLDKGGFDPTVINGGVIHAYGSNARAGAGEWMVVEADESDGSFNRLPATIAIVTNIDPEHMEHWGSFDALRKGFYDFVTNIPFYGLAVCCTDHPEVQALVGRVTDRRIVTFGFNAQADVRAINLRYENGTAHFDVALQGEGEGHLIEGMTLPMPGDHNVSNALAAVAVARHLGMKKDEIREALAAFGGVNRRFTKVGEVGGVTIIDDYGHHPVEIAAVLRAARQAVKGRVIAVHQPHRYSRLHTLFDDFCTCFNEADVVAIAEVYAAGETPIAGASRDDLVAGLIAHGHRHARAILCEDDLERLVREQARPGDMVVCLGAGTISVWANNLPARLMGRAA</sequence>
<evidence type="ECO:0000255" key="1">
    <source>
        <dbReference type="HAMAP-Rule" id="MF_00046"/>
    </source>
</evidence>
<dbReference type="EC" id="6.3.2.8" evidence="1"/>
<dbReference type="EMBL" id="CP000661">
    <property type="protein sequence ID" value="ABP69600.1"/>
    <property type="molecule type" value="Genomic_DNA"/>
</dbReference>
<dbReference type="SMR" id="A4WQD6"/>
<dbReference type="STRING" id="349102.Rsph17025_0694"/>
<dbReference type="KEGG" id="rsq:Rsph17025_0694"/>
<dbReference type="eggNOG" id="COG0773">
    <property type="taxonomic scope" value="Bacteria"/>
</dbReference>
<dbReference type="HOGENOM" id="CLU_028104_2_2_5"/>
<dbReference type="BioCyc" id="RSPH349102:G1G8M-716-MONOMER"/>
<dbReference type="UniPathway" id="UPA00219"/>
<dbReference type="GO" id="GO:0005737">
    <property type="term" value="C:cytoplasm"/>
    <property type="evidence" value="ECO:0007669"/>
    <property type="project" value="UniProtKB-SubCell"/>
</dbReference>
<dbReference type="GO" id="GO:0005524">
    <property type="term" value="F:ATP binding"/>
    <property type="evidence" value="ECO:0007669"/>
    <property type="project" value="UniProtKB-UniRule"/>
</dbReference>
<dbReference type="GO" id="GO:0008763">
    <property type="term" value="F:UDP-N-acetylmuramate-L-alanine ligase activity"/>
    <property type="evidence" value="ECO:0007669"/>
    <property type="project" value="UniProtKB-UniRule"/>
</dbReference>
<dbReference type="GO" id="GO:0051301">
    <property type="term" value="P:cell division"/>
    <property type="evidence" value="ECO:0007669"/>
    <property type="project" value="UniProtKB-KW"/>
</dbReference>
<dbReference type="GO" id="GO:0071555">
    <property type="term" value="P:cell wall organization"/>
    <property type="evidence" value="ECO:0007669"/>
    <property type="project" value="UniProtKB-KW"/>
</dbReference>
<dbReference type="GO" id="GO:0009252">
    <property type="term" value="P:peptidoglycan biosynthetic process"/>
    <property type="evidence" value="ECO:0007669"/>
    <property type="project" value="UniProtKB-UniRule"/>
</dbReference>
<dbReference type="GO" id="GO:0008360">
    <property type="term" value="P:regulation of cell shape"/>
    <property type="evidence" value="ECO:0007669"/>
    <property type="project" value="UniProtKB-KW"/>
</dbReference>
<dbReference type="Gene3D" id="3.90.190.20">
    <property type="entry name" value="Mur ligase, C-terminal domain"/>
    <property type="match status" value="1"/>
</dbReference>
<dbReference type="Gene3D" id="3.40.1190.10">
    <property type="entry name" value="Mur-like, catalytic domain"/>
    <property type="match status" value="1"/>
</dbReference>
<dbReference type="Gene3D" id="3.40.50.720">
    <property type="entry name" value="NAD(P)-binding Rossmann-like Domain"/>
    <property type="match status" value="1"/>
</dbReference>
<dbReference type="HAMAP" id="MF_00046">
    <property type="entry name" value="MurC"/>
    <property type="match status" value="1"/>
</dbReference>
<dbReference type="InterPro" id="IPR036565">
    <property type="entry name" value="Mur-like_cat_sf"/>
</dbReference>
<dbReference type="InterPro" id="IPR004101">
    <property type="entry name" value="Mur_ligase_C"/>
</dbReference>
<dbReference type="InterPro" id="IPR036615">
    <property type="entry name" value="Mur_ligase_C_dom_sf"/>
</dbReference>
<dbReference type="InterPro" id="IPR013221">
    <property type="entry name" value="Mur_ligase_cen"/>
</dbReference>
<dbReference type="InterPro" id="IPR000713">
    <property type="entry name" value="Mur_ligase_N"/>
</dbReference>
<dbReference type="InterPro" id="IPR050061">
    <property type="entry name" value="MurCDEF_pg_biosynth"/>
</dbReference>
<dbReference type="InterPro" id="IPR005758">
    <property type="entry name" value="UDP-N-AcMur_Ala_ligase_MurC"/>
</dbReference>
<dbReference type="NCBIfam" id="TIGR01082">
    <property type="entry name" value="murC"/>
    <property type="match status" value="1"/>
</dbReference>
<dbReference type="PANTHER" id="PTHR43445:SF3">
    <property type="entry name" value="UDP-N-ACETYLMURAMATE--L-ALANINE LIGASE"/>
    <property type="match status" value="1"/>
</dbReference>
<dbReference type="PANTHER" id="PTHR43445">
    <property type="entry name" value="UDP-N-ACETYLMURAMATE--L-ALANINE LIGASE-RELATED"/>
    <property type="match status" value="1"/>
</dbReference>
<dbReference type="Pfam" id="PF01225">
    <property type="entry name" value="Mur_ligase"/>
    <property type="match status" value="1"/>
</dbReference>
<dbReference type="Pfam" id="PF02875">
    <property type="entry name" value="Mur_ligase_C"/>
    <property type="match status" value="1"/>
</dbReference>
<dbReference type="Pfam" id="PF08245">
    <property type="entry name" value="Mur_ligase_M"/>
    <property type="match status" value="1"/>
</dbReference>
<dbReference type="SUPFAM" id="SSF51984">
    <property type="entry name" value="MurCD N-terminal domain"/>
    <property type="match status" value="1"/>
</dbReference>
<dbReference type="SUPFAM" id="SSF53623">
    <property type="entry name" value="MurD-like peptide ligases, catalytic domain"/>
    <property type="match status" value="1"/>
</dbReference>
<dbReference type="SUPFAM" id="SSF53244">
    <property type="entry name" value="MurD-like peptide ligases, peptide-binding domain"/>
    <property type="match status" value="1"/>
</dbReference>
<proteinExistence type="inferred from homology"/>
<accession>A4WQD6</accession>
<comment type="function">
    <text evidence="1">Cell wall formation.</text>
</comment>
<comment type="catalytic activity">
    <reaction evidence="1">
        <text>UDP-N-acetyl-alpha-D-muramate + L-alanine + ATP = UDP-N-acetyl-alpha-D-muramoyl-L-alanine + ADP + phosphate + H(+)</text>
        <dbReference type="Rhea" id="RHEA:23372"/>
        <dbReference type="ChEBI" id="CHEBI:15378"/>
        <dbReference type="ChEBI" id="CHEBI:30616"/>
        <dbReference type="ChEBI" id="CHEBI:43474"/>
        <dbReference type="ChEBI" id="CHEBI:57972"/>
        <dbReference type="ChEBI" id="CHEBI:70757"/>
        <dbReference type="ChEBI" id="CHEBI:83898"/>
        <dbReference type="ChEBI" id="CHEBI:456216"/>
        <dbReference type="EC" id="6.3.2.8"/>
    </reaction>
</comment>
<comment type="pathway">
    <text evidence="1">Cell wall biogenesis; peptidoglycan biosynthesis.</text>
</comment>
<comment type="subcellular location">
    <subcellularLocation>
        <location evidence="1">Cytoplasm</location>
    </subcellularLocation>
</comment>
<comment type="similarity">
    <text evidence="1">Belongs to the MurCDEF family.</text>
</comment>
<protein>
    <recommendedName>
        <fullName evidence="1">UDP-N-acetylmuramate--L-alanine ligase</fullName>
        <ecNumber evidence="1">6.3.2.8</ecNumber>
    </recommendedName>
    <alternativeName>
        <fullName evidence="1">UDP-N-acetylmuramoyl-L-alanine synthetase</fullName>
    </alternativeName>
</protein>
<name>MURC_CERS5</name>